<proteinExistence type="evidence at protein level"/>
<geneLocation type="plasmid">
    <name>unnamed</name>
</geneLocation>
<name>LANN_LACLL</name>
<dbReference type="EMBL" id="J04057">
    <property type="protein sequence ID" value="AAA88606.1"/>
    <property type="molecule type" value="Genomic_DNA"/>
</dbReference>
<dbReference type="EMBL" id="M65089">
    <property type="protein sequence ID" value="AAA73038.1"/>
    <property type="molecule type" value="Genomic_DNA"/>
</dbReference>
<dbReference type="EMBL" id="M24527">
    <property type="protein sequence ID" value="AAA26948.1"/>
    <property type="molecule type" value="Genomic_DNA"/>
</dbReference>
<dbReference type="EMBL" id="X68307">
    <property type="protein sequence ID" value="CAA48380.1"/>
    <property type="molecule type" value="Genomic_DNA"/>
</dbReference>
<dbReference type="EMBL" id="M27277">
    <property type="protein sequence ID" value="AAA25188.1"/>
    <property type="molecule type" value="Genomic_DNA"/>
</dbReference>
<dbReference type="EMBL" id="D00696">
    <property type="protein sequence ID" value="BAA00602.1"/>
    <property type="molecule type" value="Genomic_DNA"/>
</dbReference>
<dbReference type="EMBL" id="L16226">
    <property type="protein sequence ID" value="AAA25189.1"/>
    <property type="molecule type" value="Genomic_DNA"/>
</dbReference>
<dbReference type="EMBL" id="M79445">
    <property type="protein sequence ID" value="AAA25198.1"/>
    <property type="molecule type" value="Genomic_DNA"/>
</dbReference>
<dbReference type="PIR" id="A31915">
    <property type="entry name" value="NILLSA"/>
</dbReference>
<dbReference type="RefSeq" id="WP_014570405.1">
    <property type="nucleotide sequence ID" value="NZ_ML956318.1"/>
</dbReference>
<dbReference type="SMR" id="P13068"/>
<dbReference type="TCDB" id="1.C.20.1.1">
    <property type="family name" value="the nisin (nisin) family"/>
</dbReference>
<dbReference type="GO" id="GO:0005576">
    <property type="term" value="C:extracellular region"/>
    <property type="evidence" value="ECO:0007669"/>
    <property type="project" value="InterPro"/>
</dbReference>
<dbReference type="GO" id="GO:0005102">
    <property type="term" value="F:signaling receptor binding"/>
    <property type="evidence" value="ECO:0007669"/>
    <property type="project" value="UniProtKB-KW"/>
</dbReference>
<dbReference type="GO" id="GO:0042742">
    <property type="term" value="P:defense response to bacterium"/>
    <property type="evidence" value="ECO:0007669"/>
    <property type="project" value="UniProtKB-KW"/>
</dbReference>
<dbReference type="GO" id="GO:0031640">
    <property type="term" value="P:killing of cells of another organism"/>
    <property type="evidence" value="ECO:0007669"/>
    <property type="project" value="UniProtKB-KW"/>
</dbReference>
<dbReference type="InterPro" id="IPR006079">
    <property type="entry name" value="Lantibiotic_typ-A_Bacillales"/>
</dbReference>
<dbReference type="NCBIfam" id="TIGR03731">
    <property type="entry name" value="lantibio_gallid"/>
    <property type="match status" value="1"/>
</dbReference>
<dbReference type="Pfam" id="PF02052">
    <property type="entry name" value="Gallidermin"/>
    <property type="match status" value="1"/>
</dbReference>
<dbReference type="PRINTS" id="PR00324">
    <property type="entry name" value="NISIN"/>
</dbReference>
<evidence type="ECO:0000269" key="1">
    <source>
    </source>
</evidence>
<evidence type="ECO:0000269" key="2">
    <source ref="6"/>
</evidence>
<evidence type="ECO:0000303" key="3">
    <source>
    </source>
</evidence>
<evidence type="ECO:0000305" key="4"/>
<reference key="1">
    <citation type="journal article" date="1988" name="J. Biol. Chem.">
        <title>Structure, expression, and evolution of a gene encoding the precursor of nisin, a small protein antibiotic.</title>
        <authorList>
            <person name="Buchman G.W."/>
            <person name="Banerjee S."/>
            <person name="Hansen J.N."/>
        </authorList>
    </citation>
    <scope>NUCLEOTIDE SEQUENCE [GENOMIC DNA]</scope>
    <source>
        <strain>ATCC 11454 / DSM 20729 / LMG 7930 / NCDO 496 / NCIMB 8586 / Berridge X 13</strain>
    </source>
</reference>
<reference key="2">
    <citation type="journal article" date="1991" name="Appl. Environ. Microbiol.">
        <title>Characterization of the nisin gene as part of a polycistronic operon in the chromosome of Lactococcus lactis ATCC 11454.</title>
        <authorList>
            <person name="Steen M.T."/>
            <person name="Chung Y.J."/>
            <person name="Hansen J.N."/>
        </authorList>
    </citation>
    <scope>NUCLEOTIDE SEQUENCE [GENOMIC DNA]</scope>
    <source>
        <strain>ATCC 11454 / DSM 20729 / LMG 7930 / NCDO 496 / NCIMB 8586 / Berridge X 13</strain>
    </source>
</reference>
<reference key="3">
    <citation type="journal article" date="1989" name="J. Bacteriol.">
        <title>Nisin, a peptide antibiotic: cloning and sequencing of the nisA gene and posttranslational processing of its peptide product.</title>
        <authorList>
            <person name="Kaletta C."/>
            <person name="Entian K.-D."/>
        </authorList>
    </citation>
    <scope>NUCLEOTIDE SEQUENCE [GENOMIC DNA]</scope>
    <source>
        <strain>6F3</strain>
        <plasmid>unnamed</plasmid>
    </source>
</reference>
<reference key="4">
    <citation type="journal article" date="1992" name="Appl. Environ. Microbiol.">
        <title>Biosynthesis of the lantibiotic nisin: genomic organization and membrane localization of the NisB protein.</title>
        <authorList>
            <person name="Engelke G."/>
            <person name="Gutowski-Eckel Z."/>
            <person name="Hammelmann M."/>
            <person name="Entian K.-D."/>
        </authorList>
    </citation>
    <scope>NUCLEOTIDE SEQUENCE [GENOMIC DNA]</scope>
    <source>
        <strain>6F3</strain>
    </source>
</reference>
<reference key="5">
    <citation type="journal article" date="1993" name="Eur. J. Biochem.">
        <title>Characterization of the nisin gene cluster nisABTCIPR of Lactococcus lactis. Requirement of expression of the nisA and nisI genes for development of immunity.</title>
        <authorList>
            <person name="Kuipers O.P."/>
            <person name="Beerthuyzen M.M."/>
            <person name="Siezen R.J."/>
            <person name="de Vos W.M."/>
        </authorList>
    </citation>
    <scope>NUCLEOTIDE SEQUENCE [GENOMIC DNA]</scope>
    <source>
        <strain>NIZO R5</strain>
        <transposon>Tn5276</transposon>
    </source>
</reference>
<reference key="6">
    <citation type="book" date="1977" name="Protein cross-linking">
        <editorList>
            <person name="Friedman M."/>
        </editorList>
        <authorList>
            <person name="Gross E."/>
        </authorList>
    </citation>
    <scope>PROTEIN SEQUENCE OF 24-57</scope>
</reference>
<reference key="7">
    <citation type="journal article" date="1971" name="J. Am. Chem. Soc.">
        <title>The structure of nisin.</title>
        <authorList>
            <person name="Gross E."/>
            <person name="Morell J.L."/>
        </authorList>
    </citation>
    <scope>PROTEIN SEQUENCE OF 24-57</scope>
    <scope>DEHYDRATION AT THR-25; SER-28 AND SER-56</scope>
    <scope>LANTHIONINE CROSS-LINKS</scope>
</reference>
<reference key="8">
    <citation type="journal article" date="1991" name="Eur. J. Biochem.">
        <title>NMR studies of lantibiotics. The structure of nisin in aqueous solution.</title>
        <authorList>
            <person name="van de Ven F.J."/>
            <person name="van den Hooven H.W."/>
            <person name="Konings R.N.H."/>
            <person name="Hilbers C.W."/>
        </authorList>
    </citation>
    <scope>STRUCTURE BY NMR</scope>
</reference>
<reference key="9">
    <citation type="journal article" date="1992" name="Biochem. J.">
        <title>Solution structures of nisin A and its two major degradation products determined by NMR.</title>
        <authorList>
            <person name="Lian L.-Y."/>
            <person name="Chan W.C."/>
            <person name="Morley S.D."/>
            <person name="Roberts G.C.K."/>
            <person name="Bycroft B.W."/>
            <person name="Jackson D."/>
        </authorList>
    </citation>
    <scope>STRUCTURE BY NMR</scope>
</reference>
<reference key="10">
    <citation type="journal article" date="1993" name="FEBS Lett.">
        <title>NMR and circular dichroism studies of the lantibiotic nisin in non-aqueous environments.</title>
        <authorList>
            <person name="van den Hooven H.W."/>
            <person name="Fogolari F."/>
            <person name="Rollema H.S."/>
            <person name="Konings R.N.H."/>
            <person name="Hilbers C.W."/>
            <person name="van de Ven F.J."/>
        </authorList>
    </citation>
    <scope>STRUCTURE BY NMR</scope>
</reference>
<reference key="11">
    <citation type="journal article" date="1993" name="Biochemistry">
        <title>15N- and 13C-labeled media from Anabaena sp. for universal isotopic labeling of bacteriocins: NMR resonance assignments of leucocin A from Leuconostoc gelidum and nisin A from Lactococcus lactis.</title>
        <authorList>
            <person name="Sailer M."/>
            <person name="Helms G.L."/>
            <person name="Henkel T."/>
            <person name="Niemczura W.P."/>
            <person name="Stiles M.E."/>
            <person name="Vederas J.C."/>
        </authorList>
    </citation>
    <scope>STRUCTURE BY NMR</scope>
</reference>
<feature type="propeptide" id="PRO_0000017122" evidence="1 2">
    <location>
        <begin position="1"/>
        <end position="23"/>
    </location>
</feature>
<feature type="peptide" id="PRO_0000017123" description="Lantibiotic nisin-A">
    <location>
        <begin position="24"/>
        <end position="57"/>
    </location>
</feature>
<feature type="modified residue" description="(Z)-2,3-didehydrobutyrine" evidence="1">
    <location>
        <position position="25"/>
    </location>
</feature>
<feature type="modified residue" description="2,3-didehydroalanine (Ser)" evidence="1">
    <location>
        <position position="28"/>
    </location>
</feature>
<feature type="modified residue" description="2,3-didehydroalanine (Ser)" evidence="1">
    <location>
        <position position="56"/>
    </location>
</feature>
<feature type="cross-link" description="Lanthionine (Ser-Cys)" evidence="1">
    <location>
        <begin position="26"/>
        <end position="30"/>
    </location>
</feature>
<feature type="cross-link" description="Beta-methyllanthionine (Thr-Cys)" evidence="1">
    <location>
        <begin position="31"/>
        <end position="34"/>
    </location>
</feature>
<feature type="cross-link" description="Beta-methyllanthionine (Thr-Cys)" evidence="1">
    <location>
        <begin position="36"/>
        <end position="42"/>
    </location>
</feature>
<feature type="cross-link" description="Beta-methyllanthionine (Thr-Cys)" evidence="1">
    <location>
        <begin position="46"/>
        <end position="49"/>
    </location>
</feature>
<feature type="cross-link" description="Beta-methyllanthionine (Thr-Cys)" evidence="1">
    <location>
        <begin position="48"/>
        <end position="51"/>
    </location>
</feature>
<organism>
    <name type="scientific">Lactococcus lactis subsp. lactis</name>
    <name type="common">Streptococcus lactis</name>
    <dbReference type="NCBI Taxonomy" id="1360"/>
    <lineage>
        <taxon>Bacteria</taxon>
        <taxon>Bacillati</taxon>
        <taxon>Bacillota</taxon>
        <taxon>Bacilli</taxon>
        <taxon>Lactobacillales</taxon>
        <taxon>Streptococcaceae</taxon>
        <taxon>Lactococcus</taxon>
    </lineage>
</organism>
<accession>P13068</accession>
<comment type="function">
    <text>Lanthionine-containing peptide antibiotic (lantibiotic) active on Gram-positive bacteria. The bactericidal activity of lantibiotics is based on depolarization of energized bacterial cytoplasmic membranes, initiated by the formation of aqueous transmembrane pores.</text>
</comment>
<comment type="PTM">
    <text>Maturation of lantibiotics involves the enzymatic conversion of Thr, and Ser into dehydrated AA and the formation of thioether bonds with cysteine. This is followed by membrane translocation and cleavage of the modified precursor.</text>
</comment>
<comment type="PTM">
    <text>The structure of the 2,3-didehydrobutyrine is not discussed in PubMed:8454055. However, in Fig. 1 the residue is diagrammed as the Z-isomer.</text>
</comment>
<comment type="biotechnology">
    <text>Used as a food preservative.</text>
</comment>
<comment type="miscellaneous">
    <text evidence="3">In strain 6F3 the nisA gene is encoded on an unnamed plasmid. The reported protein sequences are identical.</text>
</comment>
<comment type="similarity">
    <text evidence="4">Belongs to the type A lantibiotic family.</text>
</comment>
<keyword id="KW-0044">Antibiotic</keyword>
<keyword id="KW-0929">Antimicrobial</keyword>
<keyword id="KW-0078">Bacteriocin</keyword>
<keyword id="KW-0903">Direct protein sequencing</keyword>
<keyword id="KW-0425">Lantibiotic</keyword>
<keyword id="KW-0614">Plasmid</keyword>
<keyword id="KW-0883">Thioether bond</keyword>
<sequence>MSTKDFNLDLVSVSKKDSGASPRITSISLCTPGCKTGALMGCNMKTATCHCSIHVSK</sequence>
<protein>
    <recommendedName>
        <fullName>Lantibiotic nisin-A</fullName>
    </recommendedName>
</protein>
<gene>
    <name type="primary">spaN</name>
    <name type="synonym">nisA</name>
</gene>